<feature type="chain" id="PRO_1000212753" description="Ribosomal protein L11 methyltransferase">
    <location>
        <begin position="1"/>
        <end position="314"/>
    </location>
</feature>
<feature type="binding site" evidence="1">
    <location>
        <position position="161"/>
    </location>
    <ligand>
        <name>S-adenosyl-L-methionine</name>
        <dbReference type="ChEBI" id="CHEBI:59789"/>
    </ligand>
</feature>
<feature type="binding site" evidence="1">
    <location>
        <position position="182"/>
    </location>
    <ligand>
        <name>S-adenosyl-L-methionine</name>
        <dbReference type="ChEBI" id="CHEBI:59789"/>
    </ligand>
</feature>
<feature type="binding site" evidence="1">
    <location>
        <position position="204"/>
    </location>
    <ligand>
        <name>S-adenosyl-L-methionine</name>
        <dbReference type="ChEBI" id="CHEBI:59789"/>
    </ligand>
</feature>
<feature type="binding site" evidence="1">
    <location>
        <position position="248"/>
    </location>
    <ligand>
        <name>S-adenosyl-L-methionine</name>
        <dbReference type="ChEBI" id="CHEBI:59789"/>
    </ligand>
</feature>
<reference key="1">
    <citation type="journal article" date="2012" name="BMC Genomics">
        <title>Comparative genomics and transcriptomics of lineages I, II, and III strains of Listeria monocytogenes.</title>
        <authorList>
            <person name="Hain T."/>
            <person name="Ghai R."/>
            <person name="Billion A."/>
            <person name="Kuenne C.T."/>
            <person name="Steinweg C."/>
            <person name="Izar B."/>
            <person name="Mohamed W."/>
            <person name="Mraheil M."/>
            <person name="Domann E."/>
            <person name="Schaffrath S."/>
            <person name="Karst U."/>
            <person name="Goesmann A."/>
            <person name="Oehm S."/>
            <person name="Puhler A."/>
            <person name="Merkl R."/>
            <person name="Vorwerk S."/>
            <person name="Glaser P."/>
            <person name="Garrido P."/>
            <person name="Rusniok C."/>
            <person name="Buchrieser C."/>
            <person name="Goebel W."/>
            <person name="Chakraborty T."/>
        </authorList>
    </citation>
    <scope>NUCLEOTIDE SEQUENCE [LARGE SCALE GENOMIC DNA]</scope>
    <source>
        <strain>CLIP80459</strain>
    </source>
</reference>
<accession>C1KVB8</accession>
<evidence type="ECO:0000255" key="1">
    <source>
        <dbReference type="HAMAP-Rule" id="MF_00735"/>
    </source>
</evidence>
<gene>
    <name evidence="1" type="primary">prmA</name>
    <name type="ordered locus">Lm4b_01481</name>
</gene>
<proteinExistence type="inferred from homology"/>
<organism>
    <name type="scientific">Listeria monocytogenes serotype 4b (strain CLIP80459)</name>
    <dbReference type="NCBI Taxonomy" id="568819"/>
    <lineage>
        <taxon>Bacteria</taxon>
        <taxon>Bacillati</taxon>
        <taxon>Bacillota</taxon>
        <taxon>Bacilli</taxon>
        <taxon>Bacillales</taxon>
        <taxon>Listeriaceae</taxon>
        <taxon>Listeria</taxon>
    </lineage>
</organism>
<sequence>MEWSEVEVHTTNEAVEPVANVLTEFGAAGVSIEDVADFLREREDKFGEIYALRREDYPEDGVIIKAYFLKTTEFVEQIPEIEQTLKNLSTFDIPLGNFQFVVNDVDDEEWATAWKKYYHPVQITDRITIVPSWESYTPSANEIIIELDPGMAFGTGTHPTTQLCIRALSDYLQPGDEVIDVGTGSGVLSIASAKLGAKSILATDLDEIATRAAEENITLNKTEHIITVKQNNLLQDINKTDVDIVVANILAEVILLFPEDVYRALKPGGIFIASGIIEDKAKVVEEALKKAGLVIEKMEQQGDWVAIISKRGVE</sequence>
<protein>
    <recommendedName>
        <fullName evidence="1">Ribosomal protein L11 methyltransferase</fullName>
        <shortName evidence="1">L11 Mtase</shortName>
        <ecNumber evidence="1">2.1.1.-</ecNumber>
    </recommendedName>
</protein>
<comment type="function">
    <text evidence="1">Methylates ribosomal protein L11.</text>
</comment>
<comment type="catalytic activity">
    <reaction evidence="1">
        <text>L-lysyl-[protein] + 3 S-adenosyl-L-methionine = N(6),N(6),N(6)-trimethyl-L-lysyl-[protein] + 3 S-adenosyl-L-homocysteine + 3 H(+)</text>
        <dbReference type="Rhea" id="RHEA:54192"/>
        <dbReference type="Rhea" id="RHEA-COMP:9752"/>
        <dbReference type="Rhea" id="RHEA-COMP:13826"/>
        <dbReference type="ChEBI" id="CHEBI:15378"/>
        <dbReference type="ChEBI" id="CHEBI:29969"/>
        <dbReference type="ChEBI" id="CHEBI:57856"/>
        <dbReference type="ChEBI" id="CHEBI:59789"/>
        <dbReference type="ChEBI" id="CHEBI:61961"/>
    </reaction>
</comment>
<comment type="subcellular location">
    <subcellularLocation>
        <location evidence="1">Cytoplasm</location>
    </subcellularLocation>
</comment>
<comment type="similarity">
    <text evidence="1">Belongs to the methyltransferase superfamily. PrmA family.</text>
</comment>
<dbReference type="EC" id="2.1.1.-" evidence="1"/>
<dbReference type="EMBL" id="FM242711">
    <property type="protein sequence ID" value="CAS05243.1"/>
    <property type="molecule type" value="Genomic_DNA"/>
</dbReference>
<dbReference type="RefSeq" id="WP_003726021.1">
    <property type="nucleotide sequence ID" value="NC_012488.1"/>
</dbReference>
<dbReference type="SMR" id="C1KVB8"/>
<dbReference type="KEGG" id="lmc:Lm4b_01481"/>
<dbReference type="HOGENOM" id="CLU_049382_0_1_9"/>
<dbReference type="GO" id="GO:0005737">
    <property type="term" value="C:cytoplasm"/>
    <property type="evidence" value="ECO:0007669"/>
    <property type="project" value="UniProtKB-SubCell"/>
</dbReference>
<dbReference type="GO" id="GO:0016279">
    <property type="term" value="F:protein-lysine N-methyltransferase activity"/>
    <property type="evidence" value="ECO:0007669"/>
    <property type="project" value="RHEA"/>
</dbReference>
<dbReference type="GO" id="GO:0032259">
    <property type="term" value="P:methylation"/>
    <property type="evidence" value="ECO:0007669"/>
    <property type="project" value="UniProtKB-KW"/>
</dbReference>
<dbReference type="CDD" id="cd02440">
    <property type="entry name" value="AdoMet_MTases"/>
    <property type="match status" value="1"/>
</dbReference>
<dbReference type="Gene3D" id="3.40.50.150">
    <property type="entry name" value="Vaccinia Virus protein VP39"/>
    <property type="match status" value="1"/>
</dbReference>
<dbReference type="HAMAP" id="MF_00735">
    <property type="entry name" value="Methyltr_PrmA"/>
    <property type="match status" value="1"/>
</dbReference>
<dbReference type="InterPro" id="IPR050078">
    <property type="entry name" value="Ribosomal_L11_MeTrfase_PrmA"/>
</dbReference>
<dbReference type="InterPro" id="IPR004498">
    <property type="entry name" value="Ribosomal_PrmA_MeTrfase"/>
</dbReference>
<dbReference type="InterPro" id="IPR029063">
    <property type="entry name" value="SAM-dependent_MTases_sf"/>
</dbReference>
<dbReference type="NCBIfam" id="TIGR00406">
    <property type="entry name" value="prmA"/>
    <property type="match status" value="1"/>
</dbReference>
<dbReference type="PANTHER" id="PTHR43648">
    <property type="entry name" value="ELECTRON TRANSFER FLAVOPROTEIN BETA SUBUNIT LYSINE METHYLTRANSFERASE"/>
    <property type="match status" value="1"/>
</dbReference>
<dbReference type="PANTHER" id="PTHR43648:SF1">
    <property type="entry name" value="ELECTRON TRANSFER FLAVOPROTEIN BETA SUBUNIT LYSINE METHYLTRANSFERASE"/>
    <property type="match status" value="1"/>
</dbReference>
<dbReference type="Pfam" id="PF06325">
    <property type="entry name" value="PrmA"/>
    <property type="match status" value="1"/>
</dbReference>
<dbReference type="PIRSF" id="PIRSF000401">
    <property type="entry name" value="RPL11_MTase"/>
    <property type="match status" value="1"/>
</dbReference>
<dbReference type="SUPFAM" id="SSF53335">
    <property type="entry name" value="S-adenosyl-L-methionine-dependent methyltransferases"/>
    <property type="match status" value="1"/>
</dbReference>
<name>PRMA_LISMC</name>
<keyword id="KW-0963">Cytoplasm</keyword>
<keyword id="KW-0489">Methyltransferase</keyword>
<keyword id="KW-0949">S-adenosyl-L-methionine</keyword>
<keyword id="KW-0808">Transferase</keyword>